<protein>
    <recommendedName>
        <fullName evidence="5">Beta-lactamase VEB-1</fullName>
        <ecNumber evidence="5 6">3.5.2.6</ecNumber>
    </recommendedName>
    <alternativeName>
        <fullName evidence="9">Vietnamese extended-spectrum beta-lactamase</fullName>
    </alternativeName>
</protein>
<reference evidence="12" key="1">
    <citation type="journal article" date="1991" name="J. Bacteriol.">
        <title>Characterization of the nonenzymatic chloramphenicol resistance (cmlA) gene of the In4 integron of Tn1696: similarity of the product to transmembrane transport proteins.</title>
        <authorList>
            <person name="Bissonnette L."/>
            <person name="Champetier S."/>
            <person name="Buisson J.-P."/>
            <person name="Roy P.H."/>
        </authorList>
    </citation>
    <scope>NUCLEOTIDE SEQUENCE [GENOMIC DNA]</scope>
    <source>
        <strain evidence="12">PaTh2</strain>
    </source>
</reference>
<reference evidence="12" key="2">
    <citation type="journal article" date="1991" name="Plasmid">
        <title>Sequence analysis of the inducible chloramphenicol resistance determinant in the Tn1696 integron suggests regulation by translational attenuation.</title>
        <authorList>
            <person name="Stokes H.W."/>
            <person name="Hall R.M."/>
        </authorList>
    </citation>
    <scope>NUCLEOTIDE SEQUENCE [GENOMIC DNA]</scope>
    <source>
        <strain evidence="12">PaTh2</strain>
    </source>
</reference>
<reference evidence="13" key="3">
    <citation type="journal article" date="1999" name="Antimicrob. Agents Chemother.">
        <title>Molecular and biochemical characterization of VEB-1, a novel class A extended-spectrum beta-lactamase encoded by an Escherichia coli integron gene.</title>
        <authorList>
            <person name="Poirel L."/>
            <person name="Naas T."/>
            <person name="Guibert M."/>
            <person name="Chaibi E.B."/>
            <person name="Labia R."/>
            <person name="Nordmann P."/>
        </authorList>
    </citation>
    <scope>NUCLEOTIDE SEQUENCE [GENOMIC DNA]</scope>
    <scope>FUNCTION</scope>
    <scope>CATALYTIC ACTIVITY</scope>
    <scope>ACTIVITY REGULATION</scope>
    <scope>BIOPHYSICOCHEMICAL PROPERTIES</scope>
</reference>
<reference evidence="12" key="4">
    <citation type="journal article" date="1999" name="Antimicrob. Agents Chemother.">
        <title>Integron-mediated rifampin resistance in Pseudomonas aeruginosa.</title>
        <authorList>
            <person name="Tribuddharat C."/>
            <person name="Fennewald M."/>
        </authorList>
    </citation>
    <scope>NUCLEOTIDE SEQUENCE [GENOMIC DNA]</scope>
    <source>
        <strain evidence="12">PaTh2</strain>
    </source>
</reference>
<reference evidence="13" key="5">
    <citation type="journal article" date="1999" name="FEMS Microbiol. Lett.">
        <title>Molecular characterization of In50, a class 1 integron encoding the gene for the extended-spectrum beta-lactamase VEB-1 in Pseudomonas aeruginosa.</title>
        <authorList>
            <person name="Naas T."/>
            <person name="Poirel L."/>
            <person name="Karim A."/>
            <person name="Nordmann P."/>
        </authorList>
    </citation>
    <scope>NUCLEOTIDE SEQUENCE [GENOMIC DNA]</scope>
    <source>
        <strain evidence="13">JES</strain>
    </source>
</reference>
<reference evidence="14" key="6">
    <citation type="submission" date="2004-02" db="EMBL/GenBank/DDBJ databases">
        <title>Two novel integrons detected in a Pseudomonas aeruginosa.</title>
        <authorList>
            <person name="Han L."/>
            <person name="Jiang X."/>
            <person name="Jiang Y."/>
            <person name="Ni Y."/>
        </authorList>
    </citation>
    <scope>NUCLEOTIDE SEQUENCE [GENOMIC DNA]</scope>
</reference>
<reference evidence="15" key="7">
    <citation type="submission" date="2005-12" db="EMBL/GenBank/DDBJ databases">
        <title>Extended spectrum beta-lactamase (blaVEB-1) in pseudomonas aeruginosa.</title>
        <authorList>
            <person name="Shi W.F."/>
        </authorList>
    </citation>
    <scope>NUCLEOTIDE SEQUENCE [GENOMIC DNA]</scope>
    <source>
        <strain evidence="15">Cz07</strain>
    </source>
</reference>
<reference evidence="16" key="8">
    <citation type="journal article" date="2010" name="Microbiology">
        <title>Acquisition of multidrug resistance transposon Tn6061 and IS6100-mediated large chromosomal inversions in Pseudomonas aeruginosa clinical isolates.</title>
        <authorList>
            <person name="Coyne S."/>
            <person name="Courvalin P."/>
            <person name="Galimand M."/>
        </authorList>
    </citation>
    <scope>NUCLEOTIDE SEQUENCE [GENOMIC DNA]</scope>
    <source>
        <strain evidence="16">BM4530</strain>
    </source>
</reference>
<reference evidence="10" key="9">
    <citation type="journal article" date="1991" name="Biochem. J.">
        <title>A standard numbering scheme for the class A beta-lactamases.</title>
        <authorList>
            <person name="Ambler R.P."/>
            <person name="Coulson A.F."/>
            <person name="Frere J.M."/>
            <person name="Ghuysen J.M."/>
            <person name="Joris B."/>
            <person name="Forsman M."/>
            <person name="Levesque R.C."/>
            <person name="Tiraby G."/>
            <person name="Waley S.G."/>
        </authorList>
    </citation>
    <scope>AMINO-ACID NUMBERING SCHEME</scope>
</reference>
<reference key="10">
    <citation type="journal article" date="2003" name="J. Bacteriol.">
        <title>IS1999 Increases Expression of the Extended-Spectrum beta-Lactamase VEB-1 in Pseudomonas aeruginosa.</title>
        <authorList>
            <person name="Aubert D."/>
            <person name="Naas T."/>
            <person name="Nordmann P."/>
        </authorList>
    </citation>
    <scope>INDUCTION</scope>
    <source>
        <strain evidence="9">KG2505</strain>
    </source>
</reference>
<proteinExistence type="evidence at protein level"/>
<sequence>MKIVKRILLVLLSLFFTIVYSNAQTDNLTLKIENVLKAKNARIGVAIFNSNEKDTLKINNDFHFPMQSVMKFPIALAVLSEIDKGNLSFEQKIEITPQDLLPKTWSPIKEEFPNGTTLTIEQILNYTVSESDNIGCDILLKLIGGTDSVQKFLNANHFTDISIKANEEQMHKDWNTQYQNWATPTAMNKLLIDTYNNKNQLLSKKSYDFIWKIMRETTTGSNRLKGQLPKNTIVAHKTGTSGINNGIAAATNDVGVITLPNGQLIFISVFVAESKETSEINEKIISDIAKITWNYYLNK</sequence>
<name>BLAV1_PSEAI</name>
<keyword id="KW-0046">Antibiotic resistance</keyword>
<keyword id="KW-0378">Hydrolase</keyword>
<keyword id="KW-0732">Signal</keyword>
<accession>O87489</accession>
<feature type="signal peptide" evidence="3">
    <location>
        <begin position="1"/>
        <end position="23"/>
    </location>
</feature>
<feature type="chain" id="PRO_5007697208" description="Beta-lactamase VEB-1" evidence="3">
    <location>
        <begin position="24"/>
        <end position="299"/>
    </location>
</feature>
<feature type="active site" description="Nucleophile; acyl-ester intermediate" evidence="1 4">
    <location>
        <position position="68"/>
    </location>
</feature>
<feature type="active site" description="Proton acceptor" evidence="2">
    <location>
        <position position="167"/>
    </location>
</feature>
<feature type="binding site" evidence="1">
    <location>
        <position position="71"/>
    </location>
    <ligand>
        <name>a beta-lactam</name>
        <dbReference type="ChEBI" id="CHEBI:35627"/>
    </ligand>
</feature>
<feature type="binding site" evidence="1">
    <location>
        <position position="131"/>
    </location>
    <ligand>
        <name>a beta-lactam</name>
        <dbReference type="ChEBI" id="CHEBI:35627"/>
    </ligand>
</feature>
<feature type="binding site" evidence="1">
    <location>
        <position position="167"/>
    </location>
    <ligand>
        <name>a beta-lactam</name>
        <dbReference type="ChEBI" id="CHEBI:35627"/>
    </ligand>
</feature>
<comment type="function">
    <text evidence="6">Class A beta-lactamase which confers resistance to the beta-lactam antibiotics, including penicillins and cephalosporins, in E.coli strain JM109 (PubMed:10049269). Acts via hydrolysis of the beta-lactam ring (PubMed:10049269). Has penicillin-, and cephalosporin-hydrolyzing activities (PubMed:10049269).</text>
</comment>
<comment type="catalytic activity">
    <reaction evidence="5 6">
        <text>a beta-lactam + H2O = a substituted beta-amino acid</text>
        <dbReference type="Rhea" id="RHEA:20401"/>
        <dbReference type="ChEBI" id="CHEBI:15377"/>
        <dbReference type="ChEBI" id="CHEBI:35627"/>
        <dbReference type="ChEBI" id="CHEBI:140347"/>
        <dbReference type="EC" id="3.5.2.6"/>
    </reaction>
</comment>
<comment type="activity regulation">
    <text evidence="6">Inhibited by the beta-lactamase-blocking agent clavulanic acid.</text>
</comment>
<comment type="biophysicochemical properties">
    <kinetics>
        <KM evidence="6">6 uM for amoxicillin (at pH 7.0 and 37 degrees Celsius)</KM>
        <KM evidence="6">2.8 uM for benzylpenicillin (at pH 7.0 and 37 degrees Celsius)</KM>
        <KM evidence="6">1 uM for ticarcillin (at pH 7.0 and 37 degrees Celsius)</KM>
        <KM evidence="6">6 uM for cefalotin (at pH 7.0 and 37 degrees Celsius)</KM>
        <KM evidence="6">12 uM for cephaloridine (at pH 7.0 and 37 degrees Celsius)</KM>
        <KM evidence="6">4.5 uM for cefoperazone (at pH 7.0 and 37 degrees Celsius)</KM>
        <KM evidence="6">5.6 uM for cefamandole (at pH 7.0 and 37 degrees Celsius)</KM>
        <KM evidence="6">22 uM for ceftriaxone (at pH 7.0 and 37 degrees Celsius)</KM>
        <KM evidence="6">38 uM for cefotaxime (at pH 7.0 and 37 degrees Celsius)</KM>
        <KM evidence="6">24 uM for cefuroxime (at pH 7.0 and 37 degrees Celsius)</KM>
        <KM evidence="6">460 uM for ceftazidime (at pH 7.0 and 37 degrees Celsius)</KM>
        <KM evidence="6">500 uM for aztreonam (at pH 7.0 and 37 degrees Celsius)</KM>
    </kinetics>
</comment>
<comment type="induction">
    <text evidence="7">Expression up-regulated from an upstream promoter, Pout, associated with the IS1999 insertion element.</text>
</comment>
<comment type="miscellaneous">
    <text evidence="11">The class A beta-lactamase family has a specific amino-acid numbering system, sometimes called Ambler or ABL numbering and often misspelt as Amber. A multiple sequence alignment was used to derive a consensus sequence and then the consensus was numbered taking into account insertions and deletions. This allows use of identical numbers, e.g. for active site residues, despite differences in protein length. UniProt always uses natural numbering of residues, hence there appear to be differences in numbering between this entry and some papers.</text>
</comment>
<comment type="similarity">
    <text evidence="5 10">Belongs to the class-A beta-lactamase family.</text>
</comment>
<gene>
    <name evidence="13" type="primary">blaVEB-1</name>
    <name evidence="12" type="synonym">blaCEF-1</name>
    <name evidence="8" type="synonym">VEB-1</name>
</gene>
<dbReference type="EC" id="3.5.2.6" evidence="5 6"/>
<dbReference type="EMBL" id="AF078527">
    <property type="protein sequence ID" value="AAC64364.1"/>
    <property type="molecule type" value="Genomic_DNA"/>
</dbReference>
<dbReference type="EMBL" id="AF133699">
    <property type="protein sequence ID" value="AAD39933.1"/>
    <property type="molecule type" value="Genomic_DNA"/>
</dbReference>
<dbReference type="EMBL" id="AY536743">
    <property type="protein sequence ID" value="AAS59137.1"/>
    <property type="molecule type" value="Genomic_DNA"/>
</dbReference>
<dbReference type="EMBL" id="DQ333895">
    <property type="protein sequence ID" value="ABC54717.1"/>
    <property type="molecule type" value="Genomic_DNA"/>
</dbReference>
<dbReference type="EMBL" id="GQ388247">
    <property type="protein sequence ID" value="ACX47972.1"/>
    <property type="molecule type" value="Genomic_DNA"/>
</dbReference>
<dbReference type="SMR" id="O87489"/>
<dbReference type="CARD" id="ARO:3002370">
    <property type="molecule name" value="VEB-1"/>
    <property type="mechanism identifier" value="ARO:0001004"/>
    <property type="mechanism name" value="antibiotic inactivation"/>
</dbReference>
<dbReference type="GO" id="GO:0008800">
    <property type="term" value="F:beta-lactamase activity"/>
    <property type="evidence" value="ECO:0007669"/>
    <property type="project" value="UniProtKB-EC"/>
</dbReference>
<dbReference type="GO" id="GO:0030655">
    <property type="term" value="P:beta-lactam antibiotic catabolic process"/>
    <property type="evidence" value="ECO:0007669"/>
    <property type="project" value="InterPro"/>
</dbReference>
<dbReference type="GO" id="GO:0046677">
    <property type="term" value="P:response to antibiotic"/>
    <property type="evidence" value="ECO:0007669"/>
    <property type="project" value="UniProtKB-KW"/>
</dbReference>
<dbReference type="Gene3D" id="3.40.710.10">
    <property type="entry name" value="DD-peptidase/beta-lactamase superfamily"/>
    <property type="match status" value="1"/>
</dbReference>
<dbReference type="InterPro" id="IPR012338">
    <property type="entry name" value="Beta-lactam/transpept-like"/>
</dbReference>
<dbReference type="InterPro" id="IPR045155">
    <property type="entry name" value="Beta-lactam_cat"/>
</dbReference>
<dbReference type="InterPro" id="IPR000871">
    <property type="entry name" value="Beta-lactam_class-A"/>
</dbReference>
<dbReference type="InterPro" id="IPR023650">
    <property type="entry name" value="Beta-lactam_class-A_AS"/>
</dbReference>
<dbReference type="NCBIfam" id="NF033103">
    <property type="entry name" value="bla_class_A"/>
    <property type="match status" value="1"/>
</dbReference>
<dbReference type="NCBIfam" id="NF000390">
    <property type="entry name" value="blaVEB"/>
    <property type="match status" value="1"/>
</dbReference>
<dbReference type="NCBIfam" id="NF012099">
    <property type="entry name" value="SubclassA2"/>
    <property type="match status" value="1"/>
</dbReference>
<dbReference type="PANTHER" id="PTHR35333">
    <property type="entry name" value="BETA-LACTAMASE"/>
    <property type="match status" value="1"/>
</dbReference>
<dbReference type="PANTHER" id="PTHR35333:SF3">
    <property type="entry name" value="BETA-LACTAMASE-TYPE TRANSPEPTIDASE FOLD CONTAINING PROTEIN"/>
    <property type="match status" value="1"/>
</dbReference>
<dbReference type="Pfam" id="PF13354">
    <property type="entry name" value="Beta-lactamase2"/>
    <property type="match status" value="1"/>
</dbReference>
<dbReference type="PRINTS" id="PR00118">
    <property type="entry name" value="BLACTAMASEA"/>
</dbReference>
<dbReference type="SUPFAM" id="SSF56601">
    <property type="entry name" value="beta-lactamase/transpeptidase-like"/>
    <property type="match status" value="1"/>
</dbReference>
<dbReference type="PROSITE" id="PS00146">
    <property type="entry name" value="BETA_LACTAMASE_A"/>
    <property type="match status" value="1"/>
</dbReference>
<organism evidence="12">
    <name type="scientific">Pseudomonas aeruginosa</name>
    <dbReference type="NCBI Taxonomy" id="287"/>
    <lineage>
        <taxon>Bacteria</taxon>
        <taxon>Pseudomonadati</taxon>
        <taxon>Pseudomonadota</taxon>
        <taxon>Gammaproteobacteria</taxon>
        <taxon>Pseudomonadales</taxon>
        <taxon>Pseudomonadaceae</taxon>
        <taxon>Pseudomonas</taxon>
    </lineage>
</organism>
<evidence type="ECO:0000250" key="1">
    <source>
        <dbReference type="UniProtKB" id="A0A5R8T042"/>
    </source>
</evidence>
<evidence type="ECO:0000250" key="2">
    <source>
        <dbReference type="UniProtKB" id="P9WKD3"/>
    </source>
</evidence>
<evidence type="ECO:0000255" key="3"/>
<evidence type="ECO:0000255" key="4">
    <source>
        <dbReference type="PROSITE-ProRule" id="PRU10101"/>
    </source>
</evidence>
<evidence type="ECO:0000255" key="5">
    <source>
        <dbReference type="RuleBase" id="RU361140"/>
    </source>
</evidence>
<evidence type="ECO:0000269" key="6">
    <source>
    </source>
</evidence>
<evidence type="ECO:0000269" key="7">
    <source>
    </source>
</evidence>
<evidence type="ECO:0000303" key="8">
    <source>
    </source>
</evidence>
<evidence type="ECO:0000303" key="9">
    <source>
    </source>
</evidence>
<evidence type="ECO:0000305" key="10"/>
<evidence type="ECO:0000305" key="11">
    <source>
    </source>
</evidence>
<evidence type="ECO:0000312" key="12">
    <source>
        <dbReference type="EMBL" id="AAC64364.1"/>
    </source>
</evidence>
<evidence type="ECO:0000312" key="13">
    <source>
        <dbReference type="EMBL" id="AAD39933.1"/>
    </source>
</evidence>
<evidence type="ECO:0000312" key="14">
    <source>
        <dbReference type="EMBL" id="AAS59137.1"/>
    </source>
</evidence>
<evidence type="ECO:0000312" key="15">
    <source>
        <dbReference type="EMBL" id="ABC54717.1"/>
    </source>
</evidence>
<evidence type="ECO:0000312" key="16">
    <source>
        <dbReference type="EMBL" id="ACX47972.1"/>
    </source>
</evidence>